<proteinExistence type="evidence at protein level"/>
<dbReference type="EC" id="2.3.1.200" evidence="3"/>
<dbReference type="EC" id="2.3.1.-" evidence="2"/>
<dbReference type="EMBL" id="BC019519">
    <property type="protein sequence ID" value="AAH19519.1"/>
    <property type="molecule type" value="mRNA"/>
</dbReference>
<dbReference type="CCDS" id="CCDS14895.1"/>
<dbReference type="RefSeq" id="NP_001033007.2">
    <property type="nucleotide sequence ID" value="NM_001037918.5"/>
</dbReference>
<dbReference type="RefSeq" id="NP_001363958.1">
    <property type="nucleotide sequence ID" value="NM_001377029.2"/>
</dbReference>
<dbReference type="RefSeq" id="NP_001363959.1">
    <property type="nucleotide sequence ID" value="NM_001377030.2"/>
</dbReference>
<dbReference type="RefSeq" id="NP_001363960.1">
    <property type="nucleotide sequence ID" value="NM_001377031.2"/>
</dbReference>
<dbReference type="RefSeq" id="NP_001363961.1">
    <property type="nucleotide sequence ID" value="NM_001377032.2"/>
</dbReference>
<dbReference type="RefSeq" id="NP_001363962.1">
    <property type="nucleotide sequence ID" value="NM_001377033.2"/>
</dbReference>
<dbReference type="RefSeq" id="NP_001363963.1">
    <property type="nucleotide sequence ID" value="NM_001377034.2"/>
</dbReference>
<dbReference type="RefSeq" id="XP_006496237.1">
    <property type="nucleotide sequence ID" value="XM_006496174.1"/>
</dbReference>
<dbReference type="RefSeq" id="XP_006496238.1">
    <property type="nucleotide sequence ID" value="XM_006496175.3"/>
</dbReference>
<dbReference type="RefSeq" id="XP_006496239.1">
    <property type="nucleotide sequence ID" value="XM_006496176.2"/>
</dbReference>
<dbReference type="RefSeq" id="XP_006496240.1">
    <property type="nucleotide sequence ID" value="XM_006496177.2"/>
</dbReference>
<dbReference type="RefSeq" id="XP_006496241.1">
    <property type="nucleotide sequence ID" value="XM_006496178.2"/>
</dbReference>
<dbReference type="SMR" id="Q8VCM4"/>
<dbReference type="FunCoup" id="Q8VCM4">
    <property type="interactions" value="2036"/>
</dbReference>
<dbReference type="STRING" id="10090.ENSMUSP00000038739"/>
<dbReference type="GlyGen" id="Q8VCM4">
    <property type="glycosylation" value="1 site"/>
</dbReference>
<dbReference type="iPTMnet" id="Q8VCM4"/>
<dbReference type="PhosphoSitePlus" id="Q8VCM4"/>
<dbReference type="SwissPalm" id="Q8VCM4"/>
<dbReference type="PaxDb" id="10090-ENSMUSP00000038739"/>
<dbReference type="ProteomicsDB" id="290037"/>
<dbReference type="Pumba" id="Q8VCM4"/>
<dbReference type="Antibodypedia" id="32790">
    <property type="antibodies" value="40 antibodies from 17 providers"/>
</dbReference>
<dbReference type="DNASU" id="623661"/>
<dbReference type="Ensembl" id="ENSMUST00000041621.5">
    <property type="protein sequence ID" value="ENSMUSP00000038739.4"/>
    <property type="gene ID" value="ENSMUSG00000037216.6"/>
</dbReference>
<dbReference type="GeneID" id="623661"/>
<dbReference type="KEGG" id="mmu:623661"/>
<dbReference type="UCSC" id="uc007ash.2">
    <property type="organism name" value="mouse"/>
</dbReference>
<dbReference type="AGR" id="MGI:3645211"/>
<dbReference type="CTD" id="51601"/>
<dbReference type="MGI" id="MGI:3645211">
    <property type="gene designation" value="Lipt1"/>
</dbReference>
<dbReference type="VEuPathDB" id="HostDB:ENSMUSG00000037216"/>
<dbReference type="eggNOG" id="KOG3159">
    <property type="taxonomic scope" value="Eukaryota"/>
</dbReference>
<dbReference type="GeneTree" id="ENSGT00390000008846"/>
<dbReference type="HOGENOM" id="CLU_022986_4_1_1"/>
<dbReference type="InParanoid" id="Q8VCM4"/>
<dbReference type="OMA" id="RYQNWDW"/>
<dbReference type="OrthoDB" id="201621at2759"/>
<dbReference type="PhylomeDB" id="Q8VCM4"/>
<dbReference type="TreeFam" id="TF314085"/>
<dbReference type="Reactome" id="R-MMU-9857492">
    <property type="pathway name" value="Protein lipoylation"/>
</dbReference>
<dbReference type="UniPathway" id="UPA00537">
    <property type="reaction ID" value="UER00595"/>
</dbReference>
<dbReference type="BioGRID-ORCS" id="623661">
    <property type="hits" value="21 hits in 80 CRISPR screens"/>
</dbReference>
<dbReference type="ChiTaRS" id="Lipt1">
    <property type="organism name" value="mouse"/>
</dbReference>
<dbReference type="PRO" id="PR:Q8VCM4"/>
<dbReference type="Proteomes" id="UP000000589">
    <property type="component" value="Chromosome 1"/>
</dbReference>
<dbReference type="RNAct" id="Q8VCM4">
    <property type="molecule type" value="protein"/>
</dbReference>
<dbReference type="Bgee" id="ENSMUSG00000037216">
    <property type="expression patterns" value="Expressed in animal zygote and 156 other cell types or tissues"/>
</dbReference>
<dbReference type="ExpressionAtlas" id="Q8VCM4">
    <property type="expression patterns" value="baseline and differential"/>
</dbReference>
<dbReference type="GO" id="GO:0005739">
    <property type="term" value="C:mitochondrion"/>
    <property type="evidence" value="ECO:0000314"/>
    <property type="project" value="MGI"/>
</dbReference>
<dbReference type="GO" id="GO:0017118">
    <property type="term" value="F:lipoyltransferase activity"/>
    <property type="evidence" value="ECO:0000250"/>
    <property type="project" value="UniProtKB"/>
</dbReference>
<dbReference type="GO" id="GO:0016410">
    <property type="term" value="F:N-acyltransferase activity"/>
    <property type="evidence" value="ECO:0000315"/>
    <property type="project" value="MGI"/>
</dbReference>
<dbReference type="GO" id="GO:0036211">
    <property type="term" value="P:protein modification process"/>
    <property type="evidence" value="ECO:0007669"/>
    <property type="project" value="InterPro"/>
</dbReference>
<dbReference type="CDD" id="cd16443">
    <property type="entry name" value="LplA"/>
    <property type="match status" value="1"/>
</dbReference>
<dbReference type="FunFam" id="3.30.390.50:FF:000005">
    <property type="entry name" value="Lipoyltransferase 1, mitochondrial"/>
    <property type="match status" value="1"/>
</dbReference>
<dbReference type="FunFam" id="3.30.930.10:FF:000045">
    <property type="entry name" value="lipoyltransferase 1, mitochondrial"/>
    <property type="match status" value="1"/>
</dbReference>
<dbReference type="Gene3D" id="3.30.930.10">
    <property type="entry name" value="Bira Bifunctional Protein, Domain 2"/>
    <property type="match status" value="1"/>
</dbReference>
<dbReference type="Gene3D" id="3.30.390.50">
    <property type="entry name" value="CO dehydrogenase flavoprotein, C-terminal domain"/>
    <property type="match status" value="1"/>
</dbReference>
<dbReference type="InterPro" id="IPR045864">
    <property type="entry name" value="aa-tRNA-synth_II/BPL/LPL"/>
</dbReference>
<dbReference type="InterPro" id="IPR004143">
    <property type="entry name" value="BPL_LPL_catalytic"/>
</dbReference>
<dbReference type="InterPro" id="IPR004562">
    <property type="entry name" value="LipoylTrfase_LipoateP_Ligase"/>
</dbReference>
<dbReference type="NCBIfam" id="TIGR00545">
    <property type="entry name" value="lipoyltrans"/>
    <property type="match status" value="1"/>
</dbReference>
<dbReference type="PANTHER" id="PTHR12561">
    <property type="entry name" value="LIPOATE-PROTEIN LIGASE"/>
    <property type="match status" value="1"/>
</dbReference>
<dbReference type="PANTHER" id="PTHR12561:SF3">
    <property type="entry name" value="LIPOYLTRANSFERASE 1, MITOCHONDRIAL"/>
    <property type="match status" value="1"/>
</dbReference>
<dbReference type="Pfam" id="PF21948">
    <property type="entry name" value="LplA-B_cat"/>
    <property type="match status" value="1"/>
</dbReference>
<dbReference type="SUPFAM" id="SSF55681">
    <property type="entry name" value="Class II aaRS and biotin synthetases"/>
    <property type="match status" value="1"/>
</dbReference>
<dbReference type="PROSITE" id="PS51733">
    <property type="entry name" value="BPL_LPL_CATALYTIC"/>
    <property type="match status" value="1"/>
</dbReference>
<protein>
    <recommendedName>
        <fullName evidence="5">Lipoyl amidotransferase LIPT1, mitochondrial</fullName>
        <ecNumber evidence="3">2.3.1.200</ecNumber>
    </recommendedName>
    <alternativeName>
        <fullName>Lipoate biosynthesis protein</fullName>
    </alternativeName>
    <alternativeName>
        <fullName>Lipoate-protein ligase</fullName>
    </alternativeName>
    <alternativeName>
        <fullName>Lipoyl ligase</fullName>
    </alternativeName>
    <alternativeName>
        <fullName>Lipoyltransferase 1</fullName>
        <ecNumber evidence="2">2.3.1.-</ecNumber>
    </alternativeName>
</protein>
<reference key="1">
    <citation type="journal article" date="2004" name="Genome Res.">
        <title>The status, quality, and expansion of the NIH full-length cDNA project: the Mammalian Gene Collection (MGC).</title>
        <authorList>
            <consortium name="The MGC Project Team"/>
        </authorList>
    </citation>
    <scope>NUCLEOTIDE SEQUENCE [LARGE SCALE MRNA]</scope>
    <source>
        <tissue>Mammary tumor</tissue>
    </source>
</reference>
<reference key="2">
    <citation type="journal article" date="2010" name="Cell">
        <title>A tissue-specific atlas of mouse protein phosphorylation and expression.</title>
        <authorList>
            <person name="Huttlin E.L."/>
            <person name="Jedrychowski M.P."/>
            <person name="Elias J.E."/>
            <person name="Goswami T."/>
            <person name="Rad R."/>
            <person name="Beausoleil S.A."/>
            <person name="Villen J."/>
            <person name="Haas W."/>
            <person name="Sowa M.E."/>
            <person name="Gygi S.P."/>
        </authorList>
    </citation>
    <scope>IDENTIFICATION BY MASS SPECTROMETRY [LARGE SCALE ANALYSIS]</scope>
    <source>
        <tissue>Brown adipose tissue</tissue>
        <tissue>Heart</tissue>
        <tissue>Spleen</tissue>
    </source>
</reference>
<feature type="transit peptide" description="Mitochondrion" evidence="1">
    <location>
        <begin position="1"/>
        <end position="25"/>
    </location>
</feature>
<feature type="chain" id="PRO_0000017857" description="Lipoyl amidotransferase LIPT1, mitochondrial">
    <location>
        <begin position="26"/>
        <end position="373"/>
    </location>
</feature>
<feature type="domain" description="BPL/LPL catalytic" evidence="4">
    <location>
        <begin position="57"/>
        <end position="243"/>
    </location>
</feature>
<feature type="binding site" evidence="2">
    <location>
        <position position="107"/>
    </location>
    <ligand>
        <name>(R)-lipoyl-5'-AMP</name>
        <dbReference type="ChEBI" id="CHEBI:83091"/>
    </ligand>
</feature>
<feature type="binding site" evidence="2">
    <location>
        <position position="151"/>
    </location>
    <ligand>
        <name>(R)-lipoyl-5'-AMP</name>
        <dbReference type="ChEBI" id="CHEBI:83091"/>
    </ligand>
</feature>
<feature type="binding site" evidence="2">
    <location>
        <position position="161"/>
    </location>
    <ligand>
        <name>(R)-lipoyl-5'-AMP</name>
        <dbReference type="ChEBI" id="CHEBI:83091"/>
    </ligand>
</feature>
<feature type="binding site" evidence="2">
    <location>
        <position position="179"/>
    </location>
    <ligand>
        <name>(R)-lipoyl-5'-AMP</name>
        <dbReference type="ChEBI" id="CHEBI:83091"/>
    </ligand>
</feature>
<keyword id="KW-0012">Acyltransferase</keyword>
<keyword id="KW-0496">Mitochondrion</keyword>
<keyword id="KW-1185">Reference proteome</keyword>
<keyword id="KW-0808">Transferase</keyword>
<keyword id="KW-0809">Transit peptide</keyword>
<organism>
    <name type="scientific">Mus musculus</name>
    <name type="common">Mouse</name>
    <dbReference type="NCBI Taxonomy" id="10090"/>
    <lineage>
        <taxon>Eukaryota</taxon>
        <taxon>Metazoa</taxon>
        <taxon>Chordata</taxon>
        <taxon>Craniata</taxon>
        <taxon>Vertebrata</taxon>
        <taxon>Euteleostomi</taxon>
        <taxon>Mammalia</taxon>
        <taxon>Eutheria</taxon>
        <taxon>Euarchontoglires</taxon>
        <taxon>Glires</taxon>
        <taxon>Rodentia</taxon>
        <taxon>Myomorpha</taxon>
        <taxon>Muroidea</taxon>
        <taxon>Muridae</taxon>
        <taxon>Murinae</taxon>
        <taxon>Mus</taxon>
        <taxon>Mus</taxon>
    </lineage>
</organism>
<sequence length="373" mass="42146">MLIPLSMKNCFRLLCQHKVPAAGFKSPPTHGLILQSISNDVYENLAFEDWIHDHIHLEGKPILFLWRNSPSVVIGRHQNPWQECNLHLMRQEGIKLARRKSGGGAVYHDMGNINLTFFTTKTKYDRMENLKLIVRALNAVQPQLDVQPTKKFDLLLDGQFKISGTASKIGRTAAYHHCTLLCSTNRTALSSSLKSPYCGIKSNATPSIPSAVKNLLERDSTLTCEVLMSAVAAEYAAHHQVDGHVNLINPADETMFPGINRKVKELQSWEWVYGRTPKFTVDTTFHVPYEQAHLEIQVFMDVKNGRIETCAIKAPDHWLPLEIGEKLNSSFIGSKFCPVETTLLTNVLLRTCPGDHHLHSKWYILCEKIRGIM</sequence>
<name>LIPT_MOUSE</name>
<comment type="function">
    <text evidence="2 3">Lipoyl amidotransferase that catalyzes the transfer of lipoyl moieties from lipoyl-protein H of the glycine cleavage system (lipoyl-GCSH) to E2 subunits of the pyruvate dehydrogenase complex (PDCE2). Unable to catalyze the transfer of octanoyl from octanoyl-GCSH to PDCE2 (By similarity). In vitro, it is also able to catalyze the transfer of the lipoyl group from lipoyl-AMP to the specific lysine residue of lipoyl domains of lipoate-dependent enzymes but this reaction may not be physiologically relevant (By similarity).</text>
</comment>
<comment type="catalytic activity">
    <reaction evidence="2">
        <text>(R)-lipoyl-5'-AMP + L-lysyl-[lipoyl-carrier protein] = N(6)-[(R)-lipoyl]-L-lysyl-[lipoyl-carrier protein] + AMP + 2 H(+)</text>
        <dbReference type="Rhea" id="RHEA:20473"/>
        <dbReference type="Rhea" id="RHEA-COMP:10500"/>
        <dbReference type="Rhea" id="RHEA-COMP:10502"/>
        <dbReference type="ChEBI" id="CHEBI:15378"/>
        <dbReference type="ChEBI" id="CHEBI:29969"/>
        <dbReference type="ChEBI" id="CHEBI:83091"/>
        <dbReference type="ChEBI" id="CHEBI:83099"/>
        <dbReference type="ChEBI" id="CHEBI:456215"/>
    </reaction>
</comment>
<comment type="catalytic activity">
    <reaction evidence="3">
        <text>N(6)-[(R)-lipoyl]-L-lysyl-[glycine-cleavage complex H protein] + L-lysyl-[lipoyl-carrier protein] = L-lysyl-[glycine-cleavage complex H protein] + N(6)-[(R)-lipoyl]-L-lysyl-[lipoyl-carrier protein]</text>
        <dbReference type="Rhea" id="RHEA:16413"/>
        <dbReference type="Rhea" id="RHEA-COMP:10494"/>
        <dbReference type="Rhea" id="RHEA-COMP:10500"/>
        <dbReference type="Rhea" id="RHEA-COMP:10501"/>
        <dbReference type="Rhea" id="RHEA-COMP:10502"/>
        <dbReference type="ChEBI" id="CHEBI:29969"/>
        <dbReference type="ChEBI" id="CHEBI:83099"/>
        <dbReference type="EC" id="2.3.1.200"/>
    </reaction>
    <physiologicalReaction direction="left-to-right" evidence="3">
        <dbReference type="Rhea" id="RHEA:16414"/>
    </physiologicalReaction>
</comment>
<comment type="pathway">
    <text>Protein modification; protein lipoylation via exogenous pathway; protein N(6)-(lipoyl)lysine from lipoate: step 2/2.</text>
</comment>
<comment type="subcellular location">
    <subcellularLocation>
        <location evidence="2">Mitochondrion</location>
    </subcellularLocation>
</comment>
<comment type="similarity">
    <text evidence="5">Belongs to the LplA family.</text>
</comment>
<evidence type="ECO:0000250" key="1"/>
<evidence type="ECO:0000250" key="2">
    <source>
        <dbReference type="UniProtKB" id="O46419"/>
    </source>
</evidence>
<evidence type="ECO:0000250" key="3">
    <source>
        <dbReference type="UniProtKB" id="Q9Y234"/>
    </source>
</evidence>
<evidence type="ECO:0000255" key="4">
    <source>
        <dbReference type="PROSITE-ProRule" id="PRU01067"/>
    </source>
</evidence>
<evidence type="ECO:0000305" key="5"/>
<evidence type="ECO:0000312" key="6">
    <source>
        <dbReference type="MGI" id="MGI:3645211"/>
    </source>
</evidence>
<accession>Q8VCM4</accession>
<gene>
    <name evidence="6" type="primary">Lipt1</name>
</gene>